<protein>
    <recommendedName>
        <fullName evidence="1">N-succinylarginine dihydrolase</fullName>
        <ecNumber evidence="1">3.5.3.23</ecNumber>
    </recommendedName>
</protein>
<proteinExistence type="inferred from homology"/>
<organism>
    <name type="scientific">Pseudomonas savastanoi pv. phaseolicola (strain 1448A / Race 6)</name>
    <name type="common">Pseudomonas syringae pv. phaseolicola (strain 1448A / Race 6)</name>
    <dbReference type="NCBI Taxonomy" id="264730"/>
    <lineage>
        <taxon>Bacteria</taxon>
        <taxon>Pseudomonadati</taxon>
        <taxon>Pseudomonadota</taxon>
        <taxon>Gammaproteobacteria</taxon>
        <taxon>Pseudomonadales</taxon>
        <taxon>Pseudomonadaceae</taxon>
        <taxon>Pseudomonas</taxon>
    </lineage>
</organism>
<evidence type="ECO:0000255" key="1">
    <source>
        <dbReference type="HAMAP-Rule" id="MF_01172"/>
    </source>
</evidence>
<comment type="function">
    <text evidence="1">Catalyzes the hydrolysis of N(2)-succinylarginine into N(2)-succinylornithine, ammonia and CO(2).</text>
</comment>
<comment type="catalytic activity">
    <reaction evidence="1">
        <text>N(2)-succinyl-L-arginine + 2 H2O + 2 H(+) = N(2)-succinyl-L-ornithine + 2 NH4(+) + CO2</text>
        <dbReference type="Rhea" id="RHEA:19533"/>
        <dbReference type="ChEBI" id="CHEBI:15377"/>
        <dbReference type="ChEBI" id="CHEBI:15378"/>
        <dbReference type="ChEBI" id="CHEBI:16526"/>
        <dbReference type="ChEBI" id="CHEBI:28938"/>
        <dbReference type="ChEBI" id="CHEBI:58241"/>
        <dbReference type="ChEBI" id="CHEBI:58514"/>
        <dbReference type="EC" id="3.5.3.23"/>
    </reaction>
</comment>
<comment type="pathway">
    <text evidence="1">Amino-acid degradation; L-arginine degradation via AST pathway; L-glutamate and succinate from L-arginine: step 2/5.</text>
</comment>
<comment type="subunit">
    <text evidence="1">Homodimer.</text>
</comment>
<comment type="similarity">
    <text evidence="1">Belongs to the succinylarginine dihydrolase family.</text>
</comment>
<dbReference type="EC" id="3.5.3.23" evidence="1"/>
<dbReference type="EMBL" id="CP000058">
    <property type="protein sequence ID" value="AAZ33398.1"/>
    <property type="molecule type" value="Genomic_DNA"/>
</dbReference>
<dbReference type="RefSeq" id="WP_011169157.1">
    <property type="nucleotide sequence ID" value="NC_005773.3"/>
</dbReference>
<dbReference type="SMR" id="Q48G20"/>
<dbReference type="KEGG" id="psp:PSPPH_3517"/>
<dbReference type="eggNOG" id="COG3724">
    <property type="taxonomic scope" value="Bacteria"/>
</dbReference>
<dbReference type="HOGENOM" id="CLU_053835_0_0_6"/>
<dbReference type="UniPathway" id="UPA00185">
    <property type="reaction ID" value="UER00280"/>
</dbReference>
<dbReference type="Proteomes" id="UP000000551">
    <property type="component" value="Chromosome"/>
</dbReference>
<dbReference type="GO" id="GO:0009015">
    <property type="term" value="F:N-succinylarginine dihydrolase activity"/>
    <property type="evidence" value="ECO:0007669"/>
    <property type="project" value="UniProtKB-UniRule"/>
</dbReference>
<dbReference type="GO" id="GO:0019544">
    <property type="term" value="P:arginine catabolic process to glutamate"/>
    <property type="evidence" value="ECO:0007669"/>
    <property type="project" value="UniProtKB-UniRule"/>
</dbReference>
<dbReference type="GO" id="GO:0019545">
    <property type="term" value="P:arginine catabolic process to succinate"/>
    <property type="evidence" value="ECO:0007669"/>
    <property type="project" value="UniProtKB-UniRule"/>
</dbReference>
<dbReference type="FunFam" id="3.75.10.20:FF:000001">
    <property type="entry name" value="N-succinylarginine dihydrolase"/>
    <property type="match status" value="1"/>
</dbReference>
<dbReference type="Gene3D" id="3.75.10.20">
    <property type="entry name" value="Succinylarginine dihydrolase"/>
    <property type="match status" value="1"/>
</dbReference>
<dbReference type="HAMAP" id="MF_01172">
    <property type="entry name" value="AstB"/>
    <property type="match status" value="1"/>
</dbReference>
<dbReference type="InterPro" id="IPR037031">
    <property type="entry name" value="AstB_sf"/>
</dbReference>
<dbReference type="InterPro" id="IPR007079">
    <property type="entry name" value="SuccinylArg_d-Hdrlase_AstB"/>
</dbReference>
<dbReference type="NCBIfam" id="TIGR03241">
    <property type="entry name" value="arg_catab_astB"/>
    <property type="match status" value="1"/>
</dbReference>
<dbReference type="NCBIfam" id="NF009789">
    <property type="entry name" value="PRK13281.1"/>
    <property type="match status" value="1"/>
</dbReference>
<dbReference type="PANTHER" id="PTHR30420">
    <property type="entry name" value="N-SUCCINYLARGININE DIHYDROLASE"/>
    <property type="match status" value="1"/>
</dbReference>
<dbReference type="PANTHER" id="PTHR30420:SF2">
    <property type="entry name" value="N-SUCCINYLARGININE DIHYDROLASE"/>
    <property type="match status" value="1"/>
</dbReference>
<dbReference type="Pfam" id="PF04996">
    <property type="entry name" value="AstB"/>
    <property type="match status" value="1"/>
</dbReference>
<dbReference type="SUPFAM" id="SSF55909">
    <property type="entry name" value="Pentein"/>
    <property type="match status" value="1"/>
</dbReference>
<feature type="chain" id="PRO_0000262368" description="N-succinylarginine dihydrolase">
    <location>
        <begin position="1"/>
        <end position="448"/>
    </location>
</feature>
<feature type="active site" evidence="1">
    <location>
        <position position="174"/>
    </location>
</feature>
<feature type="active site" evidence="1">
    <location>
        <position position="250"/>
    </location>
</feature>
<feature type="active site" description="Nucleophile" evidence="1">
    <location>
        <position position="371"/>
    </location>
</feature>
<feature type="binding site" evidence="1">
    <location>
        <begin position="19"/>
        <end position="28"/>
    </location>
    <ligand>
        <name>substrate</name>
    </ligand>
</feature>
<feature type="binding site" evidence="1">
    <location>
        <position position="110"/>
    </location>
    <ligand>
        <name>substrate</name>
    </ligand>
</feature>
<feature type="binding site" evidence="1">
    <location>
        <begin position="137"/>
        <end position="138"/>
    </location>
    <ligand>
        <name>substrate</name>
    </ligand>
</feature>
<feature type="binding site" evidence="1">
    <location>
        <position position="214"/>
    </location>
    <ligand>
        <name>substrate</name>
    </ligand>
</feature>
<feature type="binding site" evidence="1">
    <location>
        <position position="252"/>
    </location>
    <ligand>
        <name>substrate</name>
    </ligand>
</feature>
<feature type="binding site" evidence="1">
    <location>
        <position position="365"/>
    </location>
    <ligand>
        <name>substrate</name>
    </ligand>
</feature>
<name>ASTB_PSE14</name>
<keyword id="KW-0056">Arginine metabolism</keyword>
<keyword id="KW-0378">Hydrolase</keyword>
<reference key="1">
    <citation type="journal article" date="2005" name="J. Bacteriol.">
        <title>Whole-genome sequence analysis of Pseudomonas syringae pv. phaseolicola 1448A reveals divergence among pathovars in genes involved in virulence and transposition.</title>
        <authorList>
            <person name="Joardar V."/>
            <person name="Lindeberg M."/>
            <person name="Jackson R.W."/>
            <person name="Selengut J."/>
            <person name="Dodson R."/>
            <person name="Brinkac L.M."/>
            <person name="Daugherty S.C."/>
            <person name="DeBoy R.T."/>
            <person name="Durkin A.S."/>
            <person name="Gwinn Giglio M."/>
            <person name="Madupu R."/>
            <person name="Nelson W.C."/>
            <person name="Rosovitz M.J."/>
            <person name="Sullivan S.A."/>
            <person name="Crabtree J."/>
            <person name="Creasy T."/>
            <person name="Davidsen T.M."/>
            <person name="Haft D.H."/>
            <person name="Zafar N."/>
            <person name="Zhou L."/>
            <person name="Halpin R."/>
            <person name="Holley T."/>
            <person name="Khouri H.M."/>
            <person name="Feldblyum T.V."/>
            <person name="White O."/>
            <person name="Fraser C.M."/>
            <person name="Chatterjee A.K."/>
            <person name="Cartinhour S."/>
            <person name="Schneider D."/>
            <person name="Mansfield J.W."/>
            <person name="Collmer A."/>
            <person name="Buell R."/>
        </authorList>
    </citation>
    <scope>NUCLEOTIDE SEQUENCE [LARGE SCALE GENOMIC DNA]</scope>
    <source>
        <strain>1448A / Race 6</strain>
    </source>
</reference>
<accession>Q48G20</accession>
<sequence>MKSCEVNFDGLVGPTHNYGGLSYGNVASQSNSQQCANPREAALQGLAKMKALMDLGFTQGVLAPQERPDVAGLRQLGFIGSDEQVIEKAARQDMPLLVASCSASSMWVANAATVSPSADTADGRVHFTAANLNCKYHRSIEHPTTSRVLGAMFADAKHFAHHPALPPVAQFGDEGAANHTRFCQDYGQPGVEFFVFGRSAFDTRYPAPQKYPARQTLEASRAVARLHGLSEGGVVYAQQNPAVIDQGVFHNDVIAVGNGEVLFYHEDAFLNTEPMLNELRDKLGRVGGQLRAICVPRAEVSVQDAVRSYLFNSQLLSRPDGSMLLIVPQECQANASVWAYLQRLIADDSPVAQVKVFDLKQSMQNGGGPACLRLRVALKETELAAVNPGVIMTAPLYDTLTQWVDRHYRDRMSENDLADPRLLIQCRTALDELTQILKLGAVYPFQLN</sequence>
<gene>
    <name evidence="1" type="primary">astB</name>
    <name type="ordered locus">PSPPH_3517</name>
</gene>